<reference key="1">
    <citation type="journal article" date="1991" name="Gene">
        <title>Structure and evolution of a family of genes encoding antiseptic and disinfectant resistance in Staphylococcus aureus.</title>
        <authorList>
            <person name="Littlejohn T.G."/>
            <person name="DiBerardino D."/>
            <person name="Messerotti L.J."/>
            <person name="Spiers S.J."/>
            <person name="Skurray R.A."/>
        </authorList>
    </citation>
    <scope>NUCLEOTIDE SEQUENCE [GENOMIC DNA]</scope>
</reference>
<name>COP2_STAAU</name>
<geneLocation type="plasmid">
    <name>pSK89</name>
</geneLocation>
<gene>
    <name type="primary">cop</name>
</gene>
<proteinExistence type="predicted"/>
<accession>Q53750</accession>
<protein>
    <recommendedName>
        <fullName>Protein cop</fullName>
    </recommendedName>
</protein>
<comment type="function">
    <text>Putative control of replication message.</text>
</comment>
<organism>
    <name type="scientific">Staphylococcus aureus</name>
    <dbReference type="NCBI Taxonomy" id="1280"/>
    <lineage>
        <taxon>Bacteria</taxon>
        <taxon>Bacillati</taxon>
        <taxon>Bacillota</taxon>
        <taxon>Bacilli</taxon>
        <taxon>Bacillales</taxon>
        <taxon>Staphylococcaceae</taxon>
        <taxon>Staphylococcus</taxon>
    </lineage>
</organism>
<feature type="chain" id="PRO_0000068522" description="Protein cop">
    <location>
        <begin position="1"/>
        <end position="116"/>
    </location>
</feature>
<dbReference type="EMBL" id="M37889">
    <property type="protein sequence ID" value="AAB02113.1"/>
    <property type="molecule type" value="Genomic_DNA"/>
</dbReference>
<dbReference type="PIR" id="B30471">
    <property type="entry name" value="B30471"/>
</dbReference>
<dbReference type="GO" id="GO:0006260">
    <property type="term" value="P:DNA replication"/>
    <property type="evidence" value="ECO:0007669"/>
    <property type="project" value="UniProtKB-KW"/>
</dbReference>
<keyword id="KW-0235">DNA replication</keyword>
<keyword id="KW-0614">Plasmid</keyword>
<sequence>MTFNKIFKYLISLLFLSILFHTIIHKNNLVFSKTMHKKVAFFSFSFFFVWIRHLKRYNSMLEKATFFVLQTSYTNELKGLYIAGNSYPYYQDKKKLVFNSFQKPFKNHQSTKIPRE</sequence>